<evidence type="ECO:0000255" key="1">
    <source>
        <dbReference type="PROSITE-ProRule" id="PRU01026"/>
    </source>
</evidence>
<evidence type="ECO:0000305" key="2"/>
<keyword id="KW-0489">Methyltransferase</keyword>
<keyword id="KW-1185">Reference proteome</keyword>
<keyword id="KW-0694">RNA-binding</keyword>
<keyword id="KW-0698">rRNA processing</keyword>
<keyword id="KW-0949">S-adenosyl-L-methionine</keyword>
<keyword id="KW-0808">Transferase</keyword>
<proteinExistence type="inferred from homology"/>
<sequence length="320" mass="35763">MGKAVKKKYSGASSGGKEVDAEKHLTTVFKFNTDLGQHILKNPLVAQGIVDKAQIKPSDIVLEIGPGTGNLTVRILEQARKVVAVEFDPRMAAELTKRVHGTPVEKKLEILLGDFMKTELPYFDVCISNTPYQISSPLVFKLINQPKPPRVSILMFQREFAMRLLARPGDSLYCRLSANVQMWANVTHIMKVGKNNFRPPPKVESSVVRIEIKNPRPQVDFNEWDGLLRIVFVRKNRTIAAGFKSTTVLEILEKNYKAFLATQSAVPTTSSGDSLINEVKEKIEQVLSETGLAEKRAGKCDQTDFLKLLYGFHQVGIHFA</sequence>
<feature type="chain" id="PRO_0000101461" description="Dimethyladenosine transferase">
    <location>
        <begin position="1"/>
        <end position="320"/>
    </location>
</feature>
<feature type="binding site" evidence="1">
    <location>
        <position position="38"/>
    </location>
    <ligand>
        <name>S-adenosyl-L-methionine</name>
        <dbReference type="ChEBI" id="CHEBI:59789"/>
    </ligand>
</feature>
<feature type="binding site" evidence="1">
    <location>
        <position position="40"/>
    </location>
    <ligand>
        <name>S-adenosyl-L-methionine</name>
        <dbReference type="ChEBI" id="CHEBI:59789"/>
    </ligand>
</feature>
<feature type="binding site" evidence="1">
    <location>
        <position position="65"/>
    </location>
    <ligand>
        <name>S-adenosyl-L-methionine</name>
        <dbReference type="ChEBI" id="CHEBI:59789"/>
    </ligand>
</feature>
<feature type="binding site" evidence="1">
    <location>
        <position position="86"/>
    </location>
    <ligand>
        <name>S-adenosyl-L-methionine</name>
        <dbReference type="ChEBI" id="CHEBI:59789"/>
    </ligand>
</feature>
<feature type="binding site" evidence="1">
    <location>
        <position position="114"/>
    </location>
    <ligand>
        <name>S-adenosyl-L-methionine</name>
        <dbReference type="ChEBI" id="CHEBI:59789"/>
    </ligand>
</feature>
<feature type="binding site" evidence="1">
    <location>
        <position position="129"/>
    </location>
    <ligand>
        <name>S-adenosyl-L-methionine</name>
        <dbReference type="ChEBI" id="CHEBI:59789"/>
    </ligand>
</feature>
<feature type="sequence conflict" description="In Ref. 1; CAA92586." evidence="2" ref="1">
    <original>V</original>
    <variation>D</variation>
    <location>
        <position position="248"/>
    </location>
</feature>
<reference key="1">
    <citation type="journal article" date="1997" name="Yeast">
        <title>Cloning and characterization of the KlDIM1 gene from Kluyveromyces lactis encoding the m2(6)A dimethylase of the 18S rRNA.</title>
        <authorList>
            <person name="Housen I."/>
            <person name="Demonte D."/>
            <person name="Lafontaine D."/>
            <person name="Vandenhaute J."/>
        </authorList>
    </citation>
    <scope>NUCLEOTIDE SEQUENCE [GENOMIC DNA]</scope>
</reference>
<reference key="2">
    <citation type="journal article" date="2004" name="Nature">
        <title>Genome evolution in yeasts.</title>
        <authorList>
            <person name="Dujon B."/>
            <person name="Sherman D."/>
            <person name="Fischer G."/>
            <person name="Durrens P."/>
            <person name="Casaregola S."/>
            <person name="Lafontaine I."/>
            <person name="de Montigny J."/>
            <person name="Marck C."/>
            <person name="Neuveglise C."/>
            <person name="Talla E."/>
            <person name="Goffard N."/>
            <person name="Frangeul L."/>
            <person name="Aigle M."/>
            <person name="Anthouard V."/>
            <person name="Babour A."/>
            <person name="Barbe V."/>
            <person name="Barnay S."/>
            <person name="Blanchin S."/>
            <person name="Beckerich J.-M."/>
            <person name="Beyne E."/>
            <person name="Bleykasten C."/>
            <person name="Boisrame A."/>
            <person name="Boyer J."/>
            <person name="Cattolico L."/>
            <person name="Confanioleri F."/>
            <person name="de Daruvar A."/>
            <person name="Despons L."/>
            <person name="Fabre E."/>
            <person name="Fairhead C."/>
            <person name="Ferry-Dumazet H."/>
            <person name="Groppi A."/>
            <person name="Hantraye F."/>
            <person name="Hennequin C."/>
            <person name="Jauniaux N."/>
            <person name="Joyet P."/>
            <person name="Kachouri R."/>
            <person name="Kerrest A."/>
            <person name="Koszul R."/>
            <person name="Lemaire M."/>
            <person name="Lesur I."/>
            <person name="Ma L."/>
            <person name="Muller H."/>
            <person name="Nicaud J.-M."/>
            <person name="Nikolski M."/>
            <person name="Oztas S."/>
            <person name="Ozier-Kalogeropoulos O."/>
            <person name="Pellenz S."/>
            <person name="Potier S."/>
            <person name="Richard G.-F."/>
            <person name="Straub M.-L."/>
            <person name="Suleau A."/>
            <person name="Swennen D."/>
            <person name="Tekaia F."/>
            <person name="Wesolowski-Louvel M."/>
            <person name="Westhof E."/>
            <person name="Wirth B."/>
            <person name="Zeniou-Meyer M."/>
            <person name="Zivanovic Y."/>
            <person name="Bolotin-Fukuhara M."/>
            <person name="Thierry A."/>
            <person name="Bouchier C."/>
            <person name="Caudron B."/>
            <person name="Scarpelli C."/>
            <person name="Gaillardin C."/>
            <person name="Weissenbach J."/>
            <person name="Wincker P."/>
            <person name="Souciet J.-L."/>
        </authorList>
    </citation>
    <scope>NUCLEOTIDE SEQUENCE [LARGE SCALE GENOMIC DNA]</scope>
    <source>
        <strain>ATCC 8585 / CBS 2359 / DSM 70799 / NBRC 1267 / NRRL Y-1140 / WM37</strain>
    </source>
</reference>
<gene>
    <name type="primary">DIM1</name>
    <name type="ordered locus">KLLA0D00594g</name>
</gene>
<dbReference type="EC" id="2.1.1.183"/>
<dbReference type="EMBL" id="Z68294">
    <property type="protein sequence ID" value="CAA92586.1"/>
    <property type="status" value="ALT_FRAME"/>
    <property type="molecule type" value="Genomic_DNA"/>
</dbReference>
<dbReference type="EMBL" id="CR382124">
    <property type="protein sequence ID" value="CAH00194.1"/>
    <property type="molecule type" value="Genomic_DNA"/>
</dbReference>
<dbReference type="PIR" id="T09625">
    <property type="entry name" value="T09625"/>
</dbReference>
<dbReference type="RefSeq" id="XP_453098.1">
    <property type="nucleotide sequence ID" value="XM_453098.1"/>
</dbReference>
<dbReference type="SMR" id="P78697"/>
<dbReference type="FunCoup" id="P78697">
    <property type="interactions" value="826"/>
</dbReference>
<dbReference type="STRING" id="284590.P78697"/>
<dbReference type="PaxDb" id="284590-P78697"/>
<dbReference type="KEGG" id="kla:KLLA0_D00594g"/>
<dbReference type="eggNOG" id="KOG0820">
    <property type="taxonomic scope" value="Eukaryota"/>
</dbReference>
<dbReference type="HOGENOM" id="CLU_041220_2_0_1"/>
<dbReference type="InParanoid" id="P78697"/>
<dbReference type="OMA" id="ANYRTWC"/>
<dbReference type="BRENDA" id="2.1.1.183">
    <property type="organism ID" value="2825"/>
</dbReference>
<dbReference type="Proteomes" id="UP000000598">
    <property type="component" value="Chromosome D"/>
</dbReference>
<dbReference type="GO" id="GO:0005730">
    <property type="term" value="C:nucleolus"/>
    <property type="evidence" value="ECO:0007669"/>
    <property type="project" value="TreeGrafter"/>
</dbReference>
<dbReference type="GO" id="GO:0052909">
    <property type="term" value="F:18S rRNA (adenine(1779)-N(6)/adenine(1780)-N(6))-dimethyltransferase activity"/>
    <property type="evidence" value="ECO:0007669"/>
    <property type="project" value="UniProtKB-EC"/>
</dbReference>
<dbReference type="GO" id="GO:0003723">
    <property type="term" value="F:RNA binding"/>
    <property type="evidence" value="ECO:0007669"/>
    <property type="project" value="UniProtKB-KW"/>
</dbReference>
<dbReference type="CDD" id="cd02440">
    <property type="entry name" value="AdoMet_MTases"/>
    <property type="match status" value="1"/>
</dbReference>
<dbReference type="FunFam" id="1.10.8.480:FF:000002">
    <property type="entry name" value="rRNA adenine N(6)-methyltransferase"/>
    <property type="match status" value="1"/>
</dbReference>
<dbReference type="FunFam" id="3.40.50.150:FF:000007">
    <property type="entry name" value="rRNA adenine N(6)-methyltransferase"/>
    <property type="match status" value="1"/>
</dbReference>
<dbReference type="Gene3D" id="1.10.8.480">
    <property type="match status" value="1"/>
</dbReference>
<dbReference type="Gene3D" id="3.40.50.150">
    <property type="entry name" value="Vaccinia Virus protein VP39"/>
    <property type="match status" value="1"/>
</dbReference>
<dbReference type="InterPro" id="IPR001737">
    <property type="entry name" value="KsgA/Erm"/>
</dbReference>
<dbReference type="InterPro" id="IPR020596">
    <property type="entry name" value="rRNA_Ade_Mease_Trfase_CS"/>
</dbReference>
<dbReference type="InterPro" id="IPR020598">
    <property type="entry name" value="rRNA_Ade_methylase_Trfase_N"/>
</dbReference>
<dbReference type="InterPro" id="IPR011530">
    <property type="entry name" value="rRNA_adenine_dimethylase"/>
</dbReference>
<dbReference type="InterPro" id="IPR029063">
    <property type="entry name" value="SAM-dependent_MTases_sf"/>
</dbReference>
<dbReference type="NCBIfam" id="TIGR00755">
    <property type="entry name" value="ksgA"/>
    <property type="match status" value="1"/>
</dbReference>
<dbReference type="PANTHER" id="PTHR11727">
    <property type="entry name" value="DIMETHYLADENOSINE TRANSFERASE"/>
    <property type="match status" value="1"/>
</dbReference>
<dbReference type="PANTHER" id="PTHR11727:SF7">
    <property type="entry name" value="DIMETHYLADENOSINE TRANSFERASE-RELATED"/>
    <property type="match status" value="1"/>
</dbReference>
<dbReference type="Pfam" id="PF00398">
    <property type="entry name" value="RrnaAD"/>
    <property type="match status" value="1"/>
</dbReference>
<dbReference type="SMART" id="SM00650">
    <property type="entry name" value="rADc"/>
    <property type="match status" value="1"/>
</dbReference>
<dbReference type="SUPFAM" id="SSF53335">
    <property type="entry name" value="S-adenosyl-L-methionine-dependent methyltransferases"/>
    <property type="match status" value="1"/>
</dbReference>
<dbReference type="PROSITE" id="PS01131">
    <property type="entry name" value="RRNA_A_DIMETH"/>
    <property type="match status" value="1"/>
</dbReference>
<dbReference type="PROSITE" id="PS51689">
    <property type="entry name" value="SAM_RNA_A_N6_MT"/>
    <property type="match status" value="1"/>
</dbReference>
<comment type="function">
    <text>Specifically dimethylates two adjacent adenosines in the loop of a conserved hairpin near the 3'-end of 18S rRNA in the 40S particle.</text>
</comment>
<comment type="catalytic activity">
    <reaction>
        <text>adenosine(1779)/adenosine(1780) in 18S rRNA + 4 S-adenosyl-L-methionine = N(6)-dimethyladenosine(1779)/N(6)-dimethyladenosine(1780) in 18S rRNA + 4 S-adenosyl-L-homocysteine + 4 H(+)</text>
        <dbReference type="Rhea" id="RHEA:42780"/>
        <dbReference type="Rhea" id="RHEA-COMP:10234"/>
        <dbReference type="Rhea" id="RHEA-COMP:10236"/>
        <dbReference type="ChEBI" id="CHEBI:15378"/>
        <dbReference type="ChEBI" id="CHEBI:57856"/>
        <dbReference type="ChEBI" id="CHEBI:59789"/>
        <dbReference type="ChEBI" id="CHEBI:74411"/>
        <dbReference type="ChEBI" id="CHEBI:74493"/>
        <dbReference type="EC" id="2.1.1.183"/>
    </reaction>
</comment>
<comment type="similarity">
    <text evidence="1">Belongs to the class I-like SAM-binding methyltransferase superfamily. rRNA adenine N(6)-methyltransferase family.</text>
</comment>
<comment type="sequence caution" evidence="2">
    <conflict type="frameshift">
        <sequence resource="EMBL-CDS" id="CAA92586"/>
    </conflict>
</comment>
<accession>P78697</accession>
<accession>Q6CSJ1</accession>
<organism>
    <name type="scientific">Kluyveromyces lactis (strain ATCC 8585 / CBS 2359 / DSM 70799 / NBRC 1267 / NRRL Y-1140 / WM37)</name>
    <name type="common">Yeast</name>
    <name type="synonym">Candida sphaerica</name>
    <dbReference type="NCBI Taxonomy" id="284590"/>
    <lineage>
        <taxon>Eukaryota</taxon>
        <taxon>Fungi</taxon>
        <taxon>Dikarya</taxon>
        <taxon>Ascomycota</taxon>
        <taxon>Saccharomycotina</taxon>
        <taxon>Saccharomycetes</taxon>
        <taxon>Saccharomycetales</taxon>
        <taxon>Saccharomycetaceae</taxon>
        <taxon>Kluyveromyces</taxon>
    </lineage>
</organism>
<name>DIM1_KLULA</name>
<protein>
    <recommendedName>
        <fullName>Dimethyladenosine transferase</fullName>
        <ecNumber>2.1.1.183</ecNumber>
    </recommendedName>
    <alternativeName>
        <fullName>18S rRNA (adenine(1779)-N(6)/adenine(1780)-N(6))-dimethyltransferase</fullName>
    </alternativeName>
    <alternativeName>
        <fullName>18S rRNA dimethylase</fullName>
    </alternativeName>
    <alternativeName>
        <fullName>S-adenosylmethionine-6-N', N'-adenosyl(rRNA) dimethyltransferase</fullName>
    </alternativeName>
</protein>